<feature type="chain" id="PRO_1000015518" description="Deoxyuridine 5'-triphosphate nucleotidohydrolase">
    <location>
        <begin position="1"/>
        <end position="152"/>
    </location>
</feature>
<feature type="binding site" evidence="1">
    <location>
        <begin position="71"/>
        <end position="73"/>
    </location>
    <ligand>
        <name>substrate</name>
    </ligand>
</feature>
<feature type="binding site" evidence="1">
    <location>
        <position position="84"/>
    </location>
    <ligand>
        <name>substrate</name>
    </ligand>
</feature>
<feature type="binding site" evidence="1">
    <location>
        <begin position="88"/>
        <end position="90"/>
    </location>
    <ligand>
        <name>substrate</name>
    </ligand>
</feature>
<feature type="binding site" evidence="1">
    <location>
        <position position="98"/>
    </location>
    <ligand>
        <name>substrate</name>
    </ligand>
</feature>
<keyword id="KW-0378">Hydrolase</keyword>
<keyword id="KW-0460">Magnesium</keyword>
<keyword id="KW-0479">Metal-binding</keyword>
<keyword id="KW-0546">Nucleotide metabolism</keyword>
<name>DUT_SHESA</name>
<reference key="1">
    <citation type="submission" date="2006-09" db="EMBL/GenBank/DDBJ databases">
        <title>Complete sequence of chromosome 1 of Shewanella sp. ANA-3.</title>
        <authorList>
            <person name="Copeland A."/>
            <person name="Lucas S."/>
            <person name="Lapidus A."/>
            <person name="Barry K."/>
            <person name="Detter J.C."/>
            <person name="Glavina del Rio T."/>
            <person name="Hammon N."/>
            <person name="Israni S."/>
            <person name="Dalin E."/>
            <person name="Tice H."/>
            <person name="Pitluck S."/>
            <person name="Chertkov O."/>
            <person name="Brettin T."/>
            <person name="Bruce D."/>
            <person name="Han C."/>
            <person name="Tapia R."/>
            <person name="Gilna P."/>
            <person name="Schmutz J."/>
            <person name="Larimer F."/>
            <person name="Land M."/>
            <person name="Hauser L."/>
            <person name="Kyrpides N."/>
            <person name="Kim E."/>
            <person name="Newman D."/>
            <person name="Salticov C."/>
            <person name="Konstantinidis K."/>
            <person name="Klappenback J."/>
            <person name="Tiedje J."/>
            <person name="Richardson P."/>
        </authorList>
    </citation>
    <scope>NUCLEOTIDE SEQUENCE [LARGE SCALE GENOMIC DNA]</scope>
    <source>
        <strain>ANA-3</strain>
    </source>
</reference>
<proteinExistence type="inferred from homology"/>
<gene>
    <name evidence="1" type="primary">dut</name>
    <name type="ordered locus">Shewana3_3772</name>
</gene>
<protein>
    <recommendedName>
        <fullName evidence="1">Deoxyuridine 5'-triphosphate nucleotidohydrolase</fullName>
        <shortName evidence="1">dUTPase</shortName>
        <ecNumber evidence="1">3.6.1.23</ecNumber>
    </recommendedName>
    <alternativeName>
        <fullName evidence="1">dUTP pyrophosphatase</fullName>
    </alternativeName>
</protein>
<sequence>MKTPIELKILDSRIGSEFPLPAYATPGSAGMDLRAMIDTTMTIAPGETQLIPTGIAIHVADPGLAAVILPRSGLGHKHGIVLGNLVGLIDSDYQGPLMVSCWNRSDTPFTLEIGDRLAQLVFVPVVQAQFKLVDEFDSSDRGEGGFGHSGTK</sequence>
<organism>
    <name type="scientific">Shewanella sp. (strain ANA-3)</name>
    <dbReference type="NCBI Taxonomy" id="94122"/>
    <lineage>
        <taxon>Bacteria</taxon>
        <taxon>Pseudomonadati</taxon>
        <taxon>Pseudomonadota</taxon>
        <taxon>Gammaproteobacteria</taxon>
        <taxon>Alteromonadales</taxon>
        <taxon>Shewanellaceae</taxon>
        <taxon>Shewanella</taxon>
    </lineage>
</organism>
<dbReference type="EC" id="3.6.1.23" evidence="1"/>
<dbReference type="EMBL" id="CP000469">
    <property type="protein sequence ID" value="ABK49990.1"/>
    <property type="molecule type" value="Genomic_DNA"/>
</dbReference>
<dbReference type="RefSeq" id="WP_011624324.1">
    <property type="nucleotide sequence ID" value="NC_008577.1"/>
</dbReference>
<dbReference type="SMR" id="A0L1S1"/>
<dbReference type="STRING" id="94122.Shewana3_3772"/>
<dbReference type="GeneID" id="94729703"/>
<dbReference type="KEGG" id="shn:Shewana3_3772"/>
<dbReference type="eggNOG" id="COG0756">
    <property type="taxonomic scope" value="Bacteria"/>
</dbReference>
<dbReference type="HOGENOM" id="CLU_068508_1_1_6"/>
<dbReference type="OrthoDB" id="9809956at2"/>
<dbReference type="UniPathway" id="UPA00610">
    <property type="reaction ID" value="UER00666"/>
</dbReference>
<dbReference type="Proteomes" id="UP000002589">
    <property type="component" value="Chromosome"/>
</dbReference>
<dbReference type="GO" id="GO:0004170">
    <property type="term" value="F:dUTP diphosphatase activity"/>
    <property type="evidence" value="ECO:0007669"/>
    <property type="project" value="UniProtKB-UniRule"/>
</dbReference>
<dbReference type="GO" id="GO:0000287">
    <property type="term" value="F:magnesium ion binding"/>
    <property type="evidence" value="ECO:0007669"/>
    <property type="project" value="UniProtKB-UniRule"/>
</dbReference>
<dbReference type="GO" id="GO:0006226">
    <property type="term" value="P:dUMP biosynthetic process"/>
    <property type="evidence" value="ECO:0007669"/>
    <property type="project" value="UniProtKB-UniRule"/>
</dbReference>
<dbReference type="GO" id="GO:0046081">
    <property type="term" value="P:dUTP catabolic process"/>
    <property type="evidence" value="ECO:0007669"/>
    <property type="project" value="InterPro"/>
</dbReference>
<dbReference type="CDD" id="cd07557">
    <property type="entry name" value="trimeric_dUTPase"/>
    <property type="match status" value="1"/>
</dbReference>
<dbReference type="FunFam" id="2.70.40.10:FF:000002">
    <property type="entry name" value="dUTP diphosphatase"/>
    <property type="match status" value="1"/>
</dbReference>
<dbReference type="Gene3D" id="2.70.40.10">
    <property type="match status" value="1"/>
</dbReference>
<dbReference type="HAMAP" id="MF_00116">
    <property type="entry name" value="dUTPase_bact"/>
    <property type="match status" value="1"/>
</dbReference>
<dbReference type="InterPro" id="IPR008181">
    <property type="entry name" value="dUTPase"/>
</dbReference>
<dbReference type="InterPro" id="IPR029054">
    <property type="entry name" value="dUTPase-like"/>
</dbReference>
<dbReference type="InterPro" id="IPR036157">
    <property type="entry name" value="dUTPase-like_sf"/>
</dbReference>
<dbReference type="InterPro" id="IPR033704">
    <property type="entry name" value="dUTPase_trimeric"/>
</dbReference>
<dbReference type="NCBIfam" id="TIGR00576">
    <property type="entry name" value="dut"/>
    <property type="match status" value="1"/>
</dbReference>
<dbReference type="NCBIfam" id="NF001862">
    <property type="entry name" value="PRK00601.1"/>
    <property type="match status" value="1"/>
</dbReference>
<dbReference type="PANTHER" id="PTHR11241">
    <property type="entry name" value="DEOXYURIDINE 5'-TRIPHOSPHATE NUCLEOTIDOHYDROLASE"/>
    <property type="match status" value="1"/>
</dbReference>
<dbReference type="PANTHER" id="PTHR11241:SF0">
    <property type="entry name" value="DEOXYURIDINE 5'-TRIPHOSPHATE NUCLEOTIDOHYDROLASE"/>
    <property type="match status" value="1"/>
</dbReference>
<dbReference type="Pfam" id="PF00692">
    <property type="entry name" value="dUTPase"/>
    <property type="match status" value="1"/>
</dbReference>
<dbReference type="SUPFAM" id="SSF51283">
    <property type="entry name" value="dUTPase-like"/>
    <property type="match status" value="1"/>
</dbReference>
<accession>A0L1S1</accession>
<evidence type="ECO:0000255" key="1">
    <source>
        <dbReference type="HAMAP-Rule" id="MF_00116"/>
    </source>
</evidence>
<comment type="function">
    <text evidence="1">This enzyme is involved in nucleotide metabolism: it produces dUMP, the immediate precursor of thymidine nucleotides and it decreases the intracellular concentration of dUTP so that uracil cannot be incorporated into DNA.</text>
</comment>
<comment type="catalytic activity">
    <reaction evidence="1">
        <text>dUTP + H2O = dUMP + diphosphate + H(+)</text>
        <dbReference type="Rhea" id="RHEA:10248"/>
        <dbReference type="ChEBI" id="CHEBI:15377"/>
        <dbReference type="ChEBI" id="CHEBI:15378"/>
        <dbReference type="ChEBI" id="CHEBI:33019"/>
        <dbReference type="ChEBI" id="CHEBI:61555"/>
        <dbReference type="ChEBI" id="CHEBI:246422"/>
        <dbReference type="EC" id="3.6.1.23"/>
    </reaction>
</comment>
<comment type="cofactor">
    <cofactor evidence="1">
        <name>Mg(2+)</name>
        <dbReference type="ChEBI" id="CHEBI:18420"/>
    </cofactor>
</comment>
<comment type="pathway">
    <text evidence="1">Pyrimidine metabolism; dUMP biosynthesis; dUMP from dCTP (dUTP route): step 2/2.</text>
</comment>
<comment type="similarity">
    <text evidence="1">Belongs to the dUTPase family.</text>
</comment>